<sequence>MSNANPFFSQSLAERDASVRGAILKELERQQSQVELIASENIVSRAVLDAQGSVLTNKYAEGYPGKRYYGGCEFADEVEALAIERVKRLFNAGHANVQPHSGAQANGAVMLALAKPGDTVLGMSLDAGGHLTHGAKPALSGKWFNALQYGVSRDTMLLDYDQVEALAQQHKPSLIIAGFSAYPRKLDFARFRAIADSVGAKLMVDMAHIAGVIAAGRHANPVEHAHVVTSTTHKTLRGPRGGFVLTNDEEIAKKINSAVFPGLQGGPLMHVIAGKAVAFGEALTDDFKTYIDHVLANAQALGDVLKAGGVDLVTGGTDNHLLLVDLRPKGLKGAQVEQALERAGITCNKNGIPFDPEKPTITSGIRLGTPAGTTRGFGAAEFREVGRLILEVFEALRTNPEGDHATEQRVRREIFALCERFPIY</sequence>
<name>GLYA2_BURMA</name>
<gene>
    <name evidence="1" type="primary">glyA2</name>
    <name type="synonym">glyA-2</name>
    <name type="ordered locus">BMAA0471</name>
</gene>
<organism>
    <name type="scientific">Burkholderia mallei (strain ATCC 23344)</name>
    <dbReference type="NCBI Taxonomy" id="243160"/>
    <lineage>
        <taxon>Bacteria</taxon>
        <taxon>Pseudomonadati</taxon>
        <taxon>Pseudomonadota</taxon>
        <taxon>Betaproteobacteria</taxon>
        <taxon>Burkholderiales</taxon>
        <taxon>Burkholderiaceae</taxon>
        <taxon>Burkholderia</taxon>
        <taxon>pseudomallei group</taxon>
    </lineage>
</organism>
<dbReference type="EC" id="2.1.2.1" evidence="1"/>
<dbReference type="EMBL" id="CP000011">
    <property type="protein sequence ID" value="AAU46666.1"/>
    <property type="molecule type" value="Genomic_DNA"/>
</dbReference>
<dbReference type="RefSeq" id="WP_004186965.1">
    <property type="nucleotide sequence ID" value="NC_006349.2"/>
</dbReference>
<dbReference type="RefSeq" id="YP_105243.1">
    <property type="nucleotide sequence ID" value="NC_006349.2"/>
</dbReference>
<dbReference type="SMR" id="Q62DI5"/>
<dbReference type="KEGG" id="bma:BMAA0471"/>
<dbReference type="PATRIC" id="fig|243160.12.peg.3977"/>
<dbReference type="eggNOG" id="COG0112">
    <property type="taxonomic scope" value="Bacteria"/>
</dbReference>
<dbReference type="HOGENOM" id="CLU_022477_2_1_4"/>
<dbReference type="UniPathway" id="UPA00193"/>
<dbReference type="UniPathway" id="UPA00288">
    <property type="reaction ID" value="UER01023"/>
</dbReference>
<dbReference type="Proteomes" id="UP000006693">
    <property type="component" value="Chromosome 2"/>
</dbReference>
<dbReference type="GO" id="GO:0005829">
    <property type="term" value="C:cytosol"/>
    <property type="evidence" value="ECO:0007669"/>
    <property type="project" value="TreeGrafter"/>
</dbReference>
<dbReference type="GO" id="GO:0004372">
    <property type="term" value="F:glycine hydroxymethyltransferase activity"/>
    <property type="evidence" value="ECO:0007669"/>
    <property type="project" value="UniProtKB-UniRule"/>
</dbReference>
<dbReference type="GO" id="GO:0030170">
    <property type="term" value="F:pyridoxal phosphate binding"/>
    <property type="evidence" value="ECO:0007669"/>
    <property type="project" value="UniProtKB-UniRule"/>
</dbReference>
<dbReference type="GO" id="GO:0019264">
    <property type="term" value="P:glycine biosynthetic process from serine"/>
    <property type="evidence" value="ECO:0007669"/>
    <property type="project" value="UniProtKB-UniRule"/>
</dbReference>
<dbReference type="GO" id="GO:0035999">
    <property type="term" value="P:tetrahydrofolate interconversion"/>
    <property type="evidence" value="ECO:0007669"/>
    <property type="project" value="UniProtKB-UniRule"/>
</dbReference>
<dbReference type="CDD" id="cd00378">
    <property type="entry name" value="SHMT"/>
    <property type="match status" value="1"/>
</dbReference>
<dbReference type="FunFam" id="3.40.640.10:FF:000001">
    <property type="entry name" value="Serine hydroxymethyltransferase"/>
    <property type="match status" value="1"/>
</dbReference>
<dbReference type="Gene3D" id="3.90.1150.10">
    <property type="entry name" value="Aspartate Aminotransferase, domain 1"/>
    <property type="match status" value="1"/>
</dbReference>
<dbReference type="Gene3D" id="3.40.640.10">
    <property type="entry name" value="Type I PLP-dependent aspartate aminotransferase-like (Major domain)"/>
    <property type="match status" value="1"/>
</dbReference>
<dbReference type="HAMAP" id="MF_00051">
    <property type="entry name" value="SHMT"/>
    <property type="match status" value="1"/>
</dbReference>
<dbReference type="InterPro" id="IPR015424">
    <property type="entry name" value="PyrdxlP-dep_Trfase"/>
</dbReference>
<dbReference type="InterPro" id="IPR015421">
    <property type="entry name" value="PyrdxlP-dep_Trfase_major"/>
</dbReference>
<dbReference type="InterPro" id="IPR015422">
    <property type="entry name" value="PyrdxlP-dep_Trfase_small"/>
</dbReference>
<dbReference type="InterPro" id="IPR001085">
    <property type="entry name" value="Ser_HO-MeTrfase"/>
</dbReference>
<dbReference type="InterPro" id="IPR049943">
    <property type="entry name" value="Ser_HO-MeTrfase-like"/>
</dbReference>
<dbReference type="InterPro" id="IPR019798">
    <property type="entry name" value="Ser_HO-MeTrfase_PLP_BS"/>
</dbReference>
<dbReference type="InterPro" id="IPR039429">
    <property type="entry name" value="SHMT-like_dom"/>
</dbReference>
<dbReference type="NCBIfam" id="NF000586">
    <property type="entry name" value="PRK00011.1"/>
    <property type="match status" value="1"/>
</dbReference>
<dbReference type="PANTHER" id="PTHR11680">
    <property type="entry name" value="SERINE HYDROXYMETHYLTRANSFERASE"/>
    <property type="match status" value="1"/>
</dbReference>
<dbReference type="PANTHER" id="PTHR11680:SF35">
    <property type="entry name" value="SERINE HYDROXYMETHYLTRANSFERASE 1"/>
    <property type="match status" value="1"/>
</dbReference>
<dbReference type="Pfam" id="PF00464">
    <property type="entry name" value="SHMT"/>
    <property type="match status" value="1"/>
</dbReference>
<dbReference type="PIRSF" id="PIRSF000412">
    <property type="entry name" value="SHMT"/>
    <property type="match status" value="1"/>
</dbReference>
<dbReference type="SUPFAM" id="SSF53383">
    <property type="entry name" value="PLP-dependent transferases"/>
    <property type="match status" value="1"/>
</dbReference>
<dbReference type="PROSITE" id="PS00096">
    <property type="entry name" value="SHMT"/>
    <property type="match status" value="1"/>
</dbReference>
<comment type="function">
    <text evidence="1">Catalyzes the reversible interconversion of serine and glycine with tetrahydrofolate (THF) serving as the one-carbon carrier. This reaction serves as the major source of one-carbon groups required for the biosynthesis of purines, thymidylate, methionine, and other important biomolecules. Also exhibits THF-independent aldolase activity toward beta-hydroxyamino acids, producing glycine and aldehydes, via a retro-aldol mechanism.</text>
</comment>
<comment type="catalytic activity">
    <reaction evidence="1">
        <text>(6R)-5,10-methylene-5,6,7,8-tetrahydrofolate + glycine + H2O = (6S)-5,6,7,8-tetrahydrofolate + L-serine</text>
        <dbReference type="Rhea" id="RHEA:15481"/>
        <dbReference type="ChEBI" id="CHEBI:15377"/>
        <dbReference type="ChEBI" id="CHEBI:15636"/>
        <dbReference type="ChEBI" id="CHEBI:33384"/>
        <dbReference type="ChEBI" id="CHEBI:57305"/>
        <dbReference type="ChEBI" id="CHEBI:57453"/>
        <dbReference type="EC" id="2.1.2.1"/>
    </reaction>
</comment>
<comment type="cofactor">
    <cofactor evidence="1">
        <name>pyridoxal 5'-phosphate</name>
        <dbReference type="ChEBI" id="CHEBI:597326"/>
    </cofactor>
</comment>
<comment type="pathway">
    <text evidence="1">One-carbon metabolism; tetrahydrofolate interconversion.</text>
</comment>
<comment type="pathway">
    <text evidence="1">Amino-acid biosynthesis; glycine biosynthesis; glycine from L-serine: step 1/1.</text>
</comment>
<comment type="subunit">
    <text evidence="1">Homodimer.</text>
</comment>
<comment type="subcellular location">
    <subcellularLocation>
        <location evidence="1">Cytoplasm</location>
    </subcellularLocation>
</comment>
<comment type="similarity">
    <text evidence="1">Belongs to the SHMT family.</text>
</comment>
<feature type="chain" id="PRO_0000113551" description="Serine hydroxymethyltransferase 2">
    <location>
        <begin position="1"/>
        <end position="424"/>
    </location>
</feature>
<feature type="binding site" evidence="1">
    <location>
        <position position="125"/>
    </location>
    <ligand>
        <name>(6S)-5,6,7,8-tetrahydrofolate</name>
        <dbReference type="ChEBI" id="CHEBI:57453"/>
    </ligand>
</feature>
<feature type="binding site" evidence="1">
    <location>
        <begin position="129"/>
        <end position="131"/>
    </location>
    <ligand>
        <name>(6S)-5,6,7,8-tetrahydrofolate</name>
        <dbReference type="ChEBI" id="CHEBI:57453"/>
    </ligand>
</feature>
<feature type="binding site" evidence="1">
    <location>
        <position position="250"/>
    </location>
    <ligand>
        <name>(6S)-5,6,7,8-tetrahydrofolate</name>
        <dbReference type="ChEBI" id="CHEBI:57453"/>
    </ligand>
</feature>
<feature type="site" description="Plays an important role in substrate specificity" evidence="1">
    <location>
        <position position="233"/>
    </location>
</feature>
<feature type="modified residue" description="N6-(pyridoxal phosphate)lysine" evidence="1">
    <location>
        <position position="234"/>
    </location>
</feature>
<protein>
    <recommendedName>
        <fullName evidence="1">Serine hydroxymethyltransferase 2</fullName>
        <shortName evidence="1">SHMT 2</shortName>
        <shortName evidence="1">Serine methylase 2</shortName>
        <ecNumber evidence="1">2.1.2.1</ecNumber>
    </recommendedName>
</protein>
<proteinExistence type="inferred from homology"/>
<evidence type="ECO:0000255" key="1">
    <source>
        <dbReference type="HAMAP-Rule" id="MF_00051"/>
    </source>
</evidence>
<reference key="1">
    <citation type="journal article" date="2004" name="Proc. Natl. Acad. Sci. U.S.A.">
        <title>Structural flexibility in the Burkholderia mallei genome.</title>
        <authorList>
            <person name="Nierman W.C."/>
            <person name="DeShazer D."/>
            <person name="Kim H.S."/>
            <person name="Tettelin H."/>
            <person name="Nelson K.E."/>
            <person name="Feldblyum T.V."/>
            <person name="Ulrich R.L."/>
            <person name="Ronning C.M."/>
            <person name="Brinkac L.M."/>
            <person name="Daugherty S.C."/>
            <person name="Davidsen T.D."/>
            <person name="DeBoy R.T."/>
            <person name="Dimitrov G."/>
            <person name="Dodson R.J."/>
            <person name="Durkin A.S."/>
            <person name="Gwinn M.L."/>
            <person name="Haft D.H."/>
            <person name="Khouri H.M."/>
            <person name="Kolonay J.F."/>
            <person name="Madupu R."/>
            <person name="Mohammoud Y."/>
            <person name="Nelson W.C."/>
            <person name="Radune D."/>
            <person name="Romero C.M."/>
            <person name="Sarria S."/>
            <person name="Selengut J."/>
            <person name="Shamblin C."/>
            <person name="Sullivan S.A."/>
            <person name="White O."/>
            <person name="Yu Y."/>
            <person name="Zafar N."/>
            <person name="Zhou L."/>
            <person name="Fraser C.M."/>
        </authorList>
    </citation>
    <scope>NUCLEOTIDE SEQUENCE [LARGE SCALE GENOMIC DNA]</scope>
    <source>
        <strain>ATCC 23344</strain>
    </source>
</reference>
<accession>Q62DI5</accession>
<keyword id="KW-0028">Amino-acid biosynthesis</keyword>
<keyword id="KW-0963">Cytoplasm</keyword>
<keyword id="KW-0554">One-carbon metabolism</keyword>
<keyword id="KW-0663">Pyridoxal phosphate</keyword>
<keyword id="KW-1185">Reference proteome</keyword>
<keyword id="KW-0808">Transferase</keyword>